<evidence type="ECO:0000255" key="1">
    <source>
        <dbReference type="HAMAP-Rule" id="MF_01321"/>
    </source>
</evidence>
<organism>
    <name type="scientific">Phytoplasma mali (strain AT)</name>
    <dbReference type="NCBI Taxonomy" id="482235"/>
    <lineage>
        <taxon>Bacteria</taxon>
        <taxon>Bacillati</taxon>
        <taxon>Mycoplasmatota</taxon>
        <taxon>Mollicutes</taxon>
        <taxon>Acholeplasmatales</taxon>
        <taxon>Acholeplasmataceae</taxon>
        <taxon>Candidatus Phytoplasma</taxon>
        <taxon>16SrX (Apple proliferation group)</taxon>
    </lineage>
</organism>
<name>RPOB_PHYMT</name>
<reference key="1">
    <citation type="journal article" date="2008" name="BMC Genomics">
        <title>The linear chromosome of the plant-pathogenic mycoplasma 'Candidatus Phytoplasma mali'.</title>
        <authorList>
            <person name="Kube M."/>
            <person name="Schneider B."/>
            <person name="Kuhl H."/>
            <person name="Dandekar T."/>
            <person name="Heitmann K."/>
            <person name="Migdoll A.M."/>
            <person name="Reinhardt R."/>
            <person name="Seemueller E."/>
        </authorList>
    </citation>
    <scope>NUCLEOTIDE SEQUENCE [LARGE SCALE GENOMIC DNA]</scope>
    <source>
        <strain>AT</strain>
    </source>
</reference>
<protein>
    <recommendedName>
        <fullName evidence="1">DNA-directed RNA polymerase subunit beta</fullName>
        <shortName evidence="1">RNAP subunit beta</shortName>
        <ecNumber evidence="1">2.7.7.6</ecNumber>
    </recommendedName>
    <alternativeName>
        <fullName evidence="1">RNA polymerase subunit beta</fullName>
    </alternativeName>
    <alternativeName>
        <fullName evidence="1">Transcriptase subunit beta</fullName>
    </alternativeName>
</protein>
<gene>
    <name evidence="1" type="primary">rpoB</name>
    <name type="ordered locus">ATP_00390</name>
</gene>
<proteinExistence type="inferred from homology"/>
<feature type="chain" id="PRO_1000165815" description="DNA-directed RNA polymerase subunit beta">
    <location>
        <begin position="1"/>
        <end position="1273"/>
    </location>
</feature>
<dbReference type="EC" id="2.7.7.6" evidence="1"/>
<dbReference type="EMBL" id="CU469464">
    <property type="protein sequence ID" value="CAP18577.1"/>
    <property type="molecule type" value="Genomic_DNA"/>
</dbReference>
<dbReference type="SMR" id="B3QZH0"/>
<dbReference type="STRING" id="37692.ATP_00390"/>
<dbReference type="KEGG" id="pml:ATP_00390"/>
<dbReference type="eggNOG" id="COG0085">
    <property type="taxonomic scope" value="Bacteria"/>
</dbReference>
<dbReference type="HOGENOM" id="CLU_000524_4_3_14"/>
<dbReference type="BRENDA" id="2.7.7.6">
    <property type="organism ID" value="14242"/>
</dbReference>
<dbReference type="Proteomes" id="UP000002020">
    <property type="component" value="Chromosome"/>
</dbReference>
<dbReference type="GO" id="GO:0000428">
    <property type="term" value="C:DNA-directed RNA polymerase complex"/>
    <property type="evidence" value="ECO:0007669"/>
    <property type="project" value="UniProtKB-KW"/>
</dbReference>
<dbReference type="GO" id="GO:0003677">
    <property type="term" value="F:DNA binding"/>
    <property type="evidence" value="ECO:0007669"/>
    <property type="project" value="UniProtKB-UniRule"/>
</dbReference>
<dbReference type="GO" id="GO:0003899">
    <property type="term" value="F:DNA-directed RNA polymerase activity"/>
    <property type="evidence" value="ECO:0007669"/>
    <property type="project" value="UniProtKB-UniRule"/>
</dbReference>
<dbReference type="GO" id="GO:0032549">
    <property type="term" value="F:ribonucleoside binding"/>
    <property type="evidence" value="ECO:0007669"/>
    <property type="project" value="InterPro"/>
</dbReference>
<dbReference type="GO" id="GO:0006351">
    <property type="term" value="P:DNA-templated transcription"/>
    <property type="evidence" value="ECO:0007669"/>
    <property type="project" value="UniProtKB-UniRule"/>
</dbReference>
<dbReference type="CDD" id="cd00653">
    <property type="entry name" value="RNA_pol_B_RPB2"/>
    <property type="match status" value="1"/>
</dbReference>
<dbReference type="Gene3D" id="2.40.50.100">
    <property type="match status" value="1"/>
</dbReference>
<dbReference type="Gene3D" id="3.90.1100.10">
    <property type="match status" value="2"/>
</dbReference>
<dbReference type="Gene3D" id="2.30.150.10">
    <property type="entry name" value="DNA-directed RNA polymerase, beta subunit, external 1 domain"/>
    <property type="match status" value="1"/>
</dbReference>
<dbReference type="Gene3D" id="2.40.270.10">
    <property type="entry name" value="DNA-directed RNA polymerase, subunit 2, domain 6"/>
    <property type="match status" value="3"/>
</dbReference>
<dbReference type="Gene3D" id="3.90.1800.10">
    <property type="entry name" value="RNA polymerase alpha subunit dimerisation domain"/>
    <property type="match status" value="1"/>
</dbReference>
<dbReference type="HAMAP" id="MF_01321">
    <property type="entry name" value="RNApol_bact_RpoB"/>
    <property type="match status" value="1"/>
</dbReference>
<dbReference type="InterPro" id="IPR042107">
    <property type="entry name" value="DNA-dir_RNA_pol_bsu_ext_1_sf"/>
</dbReference>
<dbReference type="InterPro" id="IPR019462">
    <property type="entry name" value="DNA-dir_RNA_pol_bsu_external_1"/>
</dbReference>
<dbReference type="InterPro" id="IPR015712">
    <property type="entry name" value="DNA-dir_RNA_pol_su2"/>
</dbReference>
<dbReference type="InterPro" id="IPR007120">
    <property type="entry name" value="DNA-dir_RNAP_su2_dom"/>
</dbReference>
<dbReference type="InterPro" id="IPR037033">
    <property type="entry name" value="DNA-dir_RNAP_su2_hyb_sf"/>
</dbReference>
<dbReference type="InterPro" id="IPR010243">
    <property type="entry name" value="RNA_pol_bsu_bac"/>
</dbReference>
<dbReference type="InterPro" id="IPR007121">
    <property type="entry name" value="RNA_pol_bsu_CS"/>
</dbReference>
<dbReference type="InterPro" id="IPR007644">
    <property type="entry name" value="RNA_pol_bsu_protrusion"/>
</dbReference>
<dbReference type="InterPro" id="IPR007642">
    <property type="entry name" value="RNA_pol_Rpb2_2"/>
</dbReference>
<dbReference type="InterPro" id="IPR007645">
    <property type="entry name" value="RNA_pol_Rpb2_3"/>
</dbReference>
<dbReference type="InterPro" id="IPR007641">
    <property type="entry name" value="RNA_pol_Rpb2_7"/>
</dbReference>
<dbReference type="NCBIfam" id="NF001616">
    <property type="entry name" value="PRK00405.1"/>
    <property type="match status" value="1"/>
</dbReference>
<dbReference type="PANTHER" id="PTHR20856">
    <property type="entry name" value="DNA-DIRECTED RNA POLYMERASE I SUBUNIT 2"/>
    <property type="match status" value="1"/>
</dbReference>
<dbReference type="Pfam" id="PF04563">
    <property type="entry name" value="RNA_pol_Rpb2_1"/>
    <property type="match status" value="1"/>
</dbReference>
<dbReference type="Pfam" id="PF04561">
    <property type="entry name" value="RNA_pol_Rpb2_2"/>
    <property type="match status" value="2"/>
</dbReference>
<dbReference type="Pfam" id="PF04565">
    <property type="entry name" value="RNA_pol_Rpb2_3"/>
    <property type="match status" value="1"/>
</dbReference>
<dbReference type="Pfam" id="PF10385">
    <property type="entry name" value="RNA_pol_Rpb2_45"/>
    <property type="match status" value="1"/>
</dbReference>
<dbReference type="Pfam" id="PF00562">
    <property type="entry name" value="RNA_pol_Rpb2_6"/>
    <property type="match status" value="1"/>
</dbReference>
<dbReference type="Pfam" id="PF04560">
    <property type="entry name" value="RNA_pol_Rpb2_7"/>
    <property type="match status" value="1"/>
</dbReference>
<dbReference type="SUPFAM" id="SSF64484">
    <property type="entry name" value="beta and beta-prime subunits of DNA dependent RNA-polymerase"/>
    <property type="match status" value="1"/>
</dbReference>
<dbReference type="PROSITE" id="PS01166">
    <property type="entry name" value="RNA_POL_BETA"/>
    <property type="match status" value="1"/>
</dbReference>
<keyword id="KW-0240">DNA-directed RNA polymerase</keyword>
<keyword id="KW-0548">Nucleotidyltransferase</keyword>
<keyword id="KW-1185">Reference proteome</keyword>
<keyword id="KW-0804">Transcription</keyword>
<keyword id="KW-0808">Transferase</keyword>
<sequence length="1273" mass="144954">MEYRNIKYGTKTERRNYSKMNYDIELPNLIEIQTKSFELFLKEGIKKILKDISPIESNNGDLKLYFDDFYLDKPKYNIEEAKNRDITYYAQLFAKARLENVLTKEIKESNILITELPLITPSGTFIINGTERVVISQIVRSSGIYFTKKFDSKIRYLAQLIPTRGAWIEYEQSNKDFLYAKLDRSKKIPLNKFICCLGFDTKEKIESTFGYNKFLDLSLKKDQILNINEAIIELHSKLHRGEKVPVDVAREFIFSKLFYAKKYDLLAVGRYKFNQKLDVLKRIKNTYLAKDLIDPETNEIFLSKKTFLNEEIIEKLKNKRNCFTFELVNADNNLENEINEEILTYANYNKDKILELYIKDNIINIKTGEILVEKDTLITEQVMNIIRKNGQFIHDKVSKYFLCNKDLYQKHKERKGVFNEVLEVYILDNLGNPKPTIKVIGNIQSENNKQHITVSDIIASISYYLNLYEDIGKTDDIDHLGNRRLRLIGELLTNQFRLGLIISEKNIKDKMSISKFNNITVNSLVNFTSLSAIIKTFFNSSRLSHFMDQINPLAELTQKRRVSALGTGGIDRDRAGIEIRDINNSHYAKLCPIETPEGPSIGLIASLSTYARVDKYCFIQTPYLKVIKNEQGQPKVSEHIDYLTADQEEKEVIASVTYLNSDNTFKEKKIIARKNGETGLHEIDKITYIDVSPKQIVSVATSSIPFLEHNDASRALMGANMQRQAVPLLIPESPIVGTGIEHRIAKDSGCLILAKNSGYVTYADAQKIVITEKPKKTITINNEVIYKNEEEFNYEKAKILHKKNVFSCQTEYKLINFAKSNQDTLILQKPLVLDGDFVNKNDIITDGPATHKEELALGRNVTVAFMTWEGYNYEDAIIISEDLVKNDIYTSVHIDKYEIQTRELKKGAGVEQITREVPNVSAEAIKNLDERGIIIPGSEVKEGDILVGKITSQGMVEQTAYERLINVIIGEKSREHKDSSLRVPCGEGGIVQSVKYFSKENNDILPPEVNENIRVYIAKKRKIKEGDKIAGRHGNKGVISLILPKEDLPYMKDGTTIDIILNPLGVPSRMNIGQILEMHLGIAAQKLNIKVATPVFDGVNNDDLRKIIKEAKLSLDGKMTLYDGRTGEPFDSSISVGVMYMIKLSHMVEDKLHSRNIGPYTLMAQQPMGGRNQNGGQRFGEMEVWSLYAYGAANSLQEILTIKSDDIIGRQKTYSAITNGLPLPKPSIPESFRVFAKELQALGLYVELINSKTKENEILKSLVENQKKGSNNR</sequence>
<comment type="function">
    <text evidence="1">DNA-dependent RNA polymerase catalyzes the transcription of DNA into RNA using the four ribonucleoside triphosphates as substrates.</text>
</comment>
<comment type="catalytic activity">
    <reaction evidence="1">
        <text>RNA(n) + a ribonucleoside 5'-triphosphate = RNA(n+1) + diphosphate</text>
        <dbReference type="Rhea" id="RHEA:21248"/>
        <dbReference type="Rhea" id="RHEA-COMP:14527"/>
        <dbReference type="Rhea" id="RHEA-COMP:17342"/>
        <dbReference type="ChEBI" id="CHEBI:33019"/>
        <dbReference type="ChEBI" id="CHEBI:61557"/>
        <dbReference type="ChEBI" id="CHEBI:140395"/>
        <dbReference type="EC" id="2.7.7.6"/>
    </reaction>
</comment>
<comment type="subunit">
    <text evidence="1">The RNAP catalytic core consists of 2 alpha, 1 beta, 1 beta' and 1 omega subunit. When a sigma factor is associated with the core the holoenzyme is formed, which can initiate transcription.</text>
</comment>
<comment type="similarity">
    <text evidence="1">Belongs to the RNA polymerase beta chain family.</text>
</comment>
<accession>B3QZH0</accession>